<name>QUEF_ACIB3</name>
<accession>B7GZQ9</accession>
<organism>
    <name type="scientific">Acinetobacter baumannii (strain AB307-0294)</name>
    <dbReference type="NCBI Taxonomy" id="557600"/>
    <lineage>
        <taxon>Bacteria</taxon>
        <taxon>Pseudomonadati</taxon>
        <taxon>Pseudomonadota</taxon>
        <taxon>Gammaproteobacteria</taxon>
        <taxon>Moraxellales</taxon>
        <taxon>Moraxellaceae</taxon>
        <taxon>Acinetobacter</taxon>
        <taxon>Acinetobacter calcoaceticus/baumannii complex</taxon>
    </lineage>
</organism>
<proteinExistence type="inferred from homology"/>
<keyword id="KW-0963">Cytoplasm</keyword>
<keyword id="KW-0521">NADP</keyword>
<keyword id="KW-0560">Oxidoreductase</keyword>
<keyword id="KW-0671">Queuosine biosynthesis</keyword>
<dbReference type="EC" id="1.7.1.13" evidence="1"/>
<dbReference type="EMBL" id="CP001172">
    <property type="protein sequence ID" value="ACJ57648.1"/>
    <property type="molecule type" value="Genomic_DNA"/>
</dbReference>
<dbReference type="RefSeq" id="WP_000110172.1">
    <property type="nucleotide sequence ID" value="NZ_CP001172.1"/>
</dbReference>
<dbReference type="SMR" id="B7GZQ9"/>
<dbReference type="HOGENOM" id="CLU_054738_0_0_6"/>
<dbReference type="UniPathway" id="UPA00392"/>
<dbReference type="Proteomes" id="UP000006924">
    <property type="component" value="Chromosome"/>
</dbReference>
<dbReference type="GO" id="GO:0005737">
    <property type="term" value="C:cytoplasm"/>
    <property type="evidence" value="ECO:0007669"/>
    <property type="project" value="UniProtKB-SubCell"/>
</dbReference>
<dbReference type="GO" id="GO:0033739">
    <property type="term" value="F:preQ1 synthase activity"/>
    <property type="evidence" value="ECO:0007669"/>
    <property type="project" value="UniProtKB-UniRule"/>
</dbReference>
<dbReference type="GO" id="GO:0008616">
    <property type="term" value="P:queuosine biosynthetic process"/>
    <property type="evidence" value="ECO:0007669"/>
    <property type="project" value="UniProtKB-UniRule"/>
</dbReference>
<dbReference type="GO" id="GO:0006400">
    <property type="term" value="P:tRNA modification"/>
    <property type="evidence" value="ECO:0007669"/>
    <property type="project" value="UniProtKB-UniRule"/>
</dbReference>
<dbReference type="Gene3D" id="3.30.1130.10">
    <property type="match status" value="2"/>
</dbReference>
<dbReference type="HAMAP" id="MF_00817">
    <property type="entry name" value="QueF_type2"/>
    <property type="match status" value="1"/>
</dbReference>
<dbReference type="InterPro" id="IPR043133">
    <property type="entry name" value="GTP-CH-I_C/QueF"/>
</dbReference>
<dbReference type="InterPro" id="IPR050084">
    <property type="entry name" value="NADPH_dep_7-cyano-7-deazaG_red"/>
</dbReference>
<dbReference type="InterPro" id="IPR029500">
    <property type="entry name" value="QueF"/>
</dbReference>
<dbReference type="InterPro" id="IPR029139">
    <property type="entry name" value="QueF_N"/>
</dbReference>
<dbReference type="InterPro" id="IPR016428">
    <property type="entry name" value="QueF_type2"/>
</dbReference>
<dbReference type="NCBIfam" id="TIGR03138">
    <property type="entry name" value="QueF"/>
    <property type="match status" value="1"/>
</dbReference>
<dbReference type="PANTHER" id="PTHR34354">
    <property type="entry name" value="NADPH-DEPENDENT 7-CYANO-7-DEAZAGUANINE REDUCTASE"/>
    <property type="match status" value="1"/>
</dbReference>
<dbReference type="PANTHER" id="PTHR34354:SF1">
    <property type="entry name" value="NADPH-DEPENDENT 7-CYANO-7-DEAZAGUANINE REDUCTASE"/>
    <property type="match status" value="1"/>
</dbReference>
<dbReference type="Pfam" id="PF14489">
    <property type="entry name" value="QueF"/>
    <property type="match status" value="1"/>
</dbReference>
<dbReference type="Pfam" id="PF14819">
    <property type="entry name" value="QueF_N"/>
    <property type="match status" value="1"/>
</dbReference>
<dbReference type="PIRSF" id="PIRSF004750">
    <property type="entry name" value="Nitrile_oxidored_YqcD_prd"/>
    <property type="match status" value="1"/>
</dbReference>
<dbReference type="SUPFAM" id="SSF55620">
    <property type="entry name" value="Tetrahydrobiopterin biosynthesis enzymes-like"/>
    <property type="match status" value="1"/>
</dbReference>
<protein>
    <recommendedName>
        <fullName evidence="1">NADPH-dependent 7-cyano-7-deazaguanine reductase</fullName>
        <ecNumber evidence="1">1.7.1.13</ecNumber>
    </recommendedName>
    <alternativeName>
        <fullName evidence="1">7-cyano-7-carbaguanine reductase</fullName>
    </alternativeName>
    <alternativeName>
        <fullName evidence="1">NADPH-dependent nitrile oxidoreductase</fullName>
    </alternativeName>
    <alternativeName>
        <fullName evidence="1">PreQ(0) reductase</fullName>
    </alternativeName>
</protein>
<comment type="function">
    <text evidence="1">Catalyzes the NADPH-dependent reduction of 7-cyano-7-deazaguanine (preQ0) to 7-aminomethyl-7-deazaguanine (preQ1).</text>
</comment>
<comment type="catalytic activity">
    <reaction evidence="1">
        <text>7-aminomethyl-7-carbaguanine + 2 NADP(+) = 7-cyano-7-deazaguanine + 2 NADPH + 3 H(+)</text>
        <dbReference type="Rhea" id="RHEA:13409"/>
        <dbReference type="ChEBI" id="CHEBI:15378"/>
        <dbReference type="ChEBI" id="CHEBI:45075"/>
        <dbReference type="ChEBI" id="CHEBI:57783"/>
        <dbReference type="ChEBI" id="CHEBI:58349"/>
        <dbReference type="ChEBI" id="CHEBI:58703"/>
        <dbReference type="EC" id="1.7.1.13"/>
    </reaction>
</comment>
<comment type="pathway">
    <text evidence="1">tRNA modification; tRNA-queuosine biosynthesis.</text>
</comment>
<comment type="subunit">
    <text evidence="1">Homodimer.</text>
</comment>
<comment type="subcellular location">
    <subcellularLocation>
        <location evidence="1">Cytoplasm</location>
    </subcellularLocation>
</comment>
<comment type="similarity">
    <text evidence="1">Belongs to the GTP cyclohydrolase I family. QueF type 2 subfamily.</text>
</comment>
<feature type="chain" id="PRO_1000193204" description="NADPH-dependent 7-cyano-7-deazaguanine reductase">
    <location>
        <begin position="1"/>
        <end position="270"/>
    </location>
</feature>
<feature type="active site" description="Thioimide intermediate" evidence="1">
    <location>
        <position position="177"/>
    </location>
</feature>
<feature type="active site" description="Proton donor" evidence="1">
    <location>
        <position position="184"/>
    </location>
</feature>
<feature type="binding site" evidence="1">
    <location>
        <begin position="79"/>
        <end position="81"/>
    </location>
    <ligand>
        <name>substrate</name>
    </ligand>
</feature>
<feature type="binding site" evidence="1">
    <location>
        <begin position="81"/>
        <end position="82"/>
    </location>
    <ligand>
        <name>NADPH</name>
        <dbReference type="ChEBI" id="CHEBI:57783"/>
    </ligand>
</feature>
<feature type="binding site" evidence="1">
    <location>
        <begin position="216"/>
        <end position="217"/>
    </location>
    <ligand>
        <name>substrate</name>
    </ligand>
</feature>
<feature type="binding site" evidence="1">
    <location>
        <begin position="245"/>
        <end position="246"/>
    </location>
    <ligand>
        <name>NADPH</name>
        <dbReference type="ChEBI" id="CHEBI:57783"/>
    </ligand>
</feature>
<gene>
    <name evidence="1" type="primary">queF</name>
    <name type="ordered locus">ABBFA_001128</name>
</gene>
<reference key="1">
    <citation type="journal article" date="2008" name="J. Bacteriol.">
        <title>Comparative genome sequence analysis of multidrug-resistant Acinetobacter baumannii.</title>
        <authorList>
            <person name="Adams M.D."/>
            <person name="Goglin K."/>
            <person name="Molyneaux N."/>
            <person name="Hujer K.M."/>
            <person name="Lavender H."/>
            <person name="Jamison J.J."/>
            <person name="MacDonald I.J."/>
            <person name="Martin K.M."/>
            <person name="Russo T."/>
            <person name="Campagnari A.A."/>
            <person name="Hujer A.M."/>
            <person name="Bonomo R.A."/>
            <person name="Gill S.R."/>
        </authorList>
    </citation>
    <scope>NUCLEOTIDE SEQUENCE [LARGE SCALE GENOMIC DNA]</scope>
    <source>
        <strain>AB307-0294</strain>
    </source>
</reference>
<evidence type="ECO:0000255" key="1">
    <source>
        <dbReference type="HAMAP-Rule" id="MF_00817"/>
    </source>
</evidence>
<sequence>MSVEQSLLGKETQYPTSYQPDVLFPIARAQSREKYAHIQGITQGKDWWHVFEISWLNAHGIPQVAIGRITLPASSPNLIESKSLKLYFNSLNFTQFDSTQSFIETVEKDLSAAAGAKVELTLFQVDDLEISKPQGICIDDLMPERLEQHPDATLLKLDESGEEIEVELYSHLLRSNCPVTGQPDWGTVFIRFKGKKPCYRSLLAYIISYRQHNGFHEQCVEQIFADIWQNLQPEKLMVYATYTRRGGLDINPCRVSDLTWMPKPIRLARQ</sequence>